<gene>
    <name evidence="1" type="primary">murG</name>
    <name type="ordered locus">Sala_1881</name>
</gene>
<organism>
    <name type="scientific">Sphingopyxis alaskensis (strain DSM 13593 / LMG 18877 / RB2256)</name>
    <name type="common">Sphingomonas alaskensis</name>
    <dbReference type="NCBI Taxonomy" id="317655"/>
    <lineage>
        <taxon>Bacteria</taxon>
        <taxon>Pseudomonadati</taxon>
        <taxon>Pseudomonadota</taxon>
        <taxon>Alphaproteobacteria</taxon>
        <taxon>Sphingomonadales</taxon>
        <taxon>Sphingomonadaceae</taxon>
        <taxon>Sphingopyxis</taxon>
    </lineage>
</organism>
<proteinExistence type="inferred from homology"/>
<evidence type="ECO:0000255" key="1">
    <source>
        <dbReference type="HAMAP-Rule" id="MF_00033"/>
    </source>
</evidence>
<sequence>MTATRHFLLAAGGTGGHMLPAYALADELIARGHRVALVSDDRGLKIPGAPAELETHVLPAGRASGGPLGWLKGALAIRKGRRMAIELIDDFDPAVVVGFGGYPSLPSLLAAGATKRPRVIHEQNAVLGRVNRLMAPRVDAVAVAYHHIQRYPAGHELKMHITGNPVRDEIVAIREEGFPPLLEDGIFRLLVVGGSLGATVLSEVVPAAIAMLPRALLDRLQVVQQCREDDLEAVRARYAELGVAAECAPYIKDFPERLRWAHMVIARAGASTVAELACAGRPAIFVPYPHAMDDHQTYNVVDLVEAGGAISFRQSDFIPAEVAKHIQRMAVEPGVLEEAAERAASCGLPDATRDLADLVESFAAPPMMDVIRVGASLPRAASGIAAARREAK</sequence>
<comment type="function">
    <text evidence="1">Cell wall formation. Catalyzes the transfer of a GlcNAc subunit on undecaprenyl-pyrophosphoryl-MurNAc-pentapeptide (lipid intermediate I) to form undecaprenyl-pyrophosphoryl-MurNAc-(pentapeptide)GlcNAc (lipid intermediate II).</text>
</comment>
<comment type="catalytic activity">
    <reaction evidence="1">
        <text>di-trans,octa-cis-undecaprenyl diphospho-N-acetyl-alpha-D-muramoyl-L-alanyl-D-glutamyl-meso-2,6-diaminopimeloyl-D-alanyl-D-alanine + UDP-N-acetyl-alpha-D-glucosamine = di-trans,octa-cis-undecaprenyl diphospho-[N-acetyl-alpha-D-glucosaminyl-(1-&gt;4)]-N-acetyl-alpha-D-muramoyl-L-alanyl-D-glutamyl-meso-2,6-diaminopimeloyl-D-alanyl-D-alanine + UDP + H(+)</text>
        <dbReference type="Rhea" id="RHEA:31227"/>
        <dbReference type="ChEBI" id="CHEBI:15378"/>
        <dbReference type="ChEBI" id="CHEBI:57705"/>
        <dbReference type="ChEBI" id="CHEBI:58223"/>
        <dbReference type="ChEBI" id="CHEBI:61387"/>
        <dbReference type="ChEBI" id="CHEBI:61388"/>
        <dbReference type="EC" id="2.4.1.227"/>
    </reaction>
</comment>
<comment type="pathway">
    <text evidence="1">Cell wall biogenesis; peptidoglycan biosynthesis.</text>
</comment>
<comment type="subcellular location">
    <subcellularLocation>
        <location evidence="1">Cell inner membrane</location>
        <topology evidence="1">Peripheral membrane protein</topology>
        <orientation evidence="1">Cytoplasmic side</orientation>
    </subcellularLocation>
</comment>
<comment type="similarity">
    <text evidence="1">Belongs to the glycosyltransferase 28 family. MurG subfamily.</text>
</comment>
<reference key="1">
    <citation type="journal article" date="2009" name="Proc. Natl. Acad. Sci. U.S.A.">
        <title>The genomic basis of trophic strategy in marine bacteria.</title>
        <authorList>
            <person name="Lauro F.M."/>
            <person name="McDougald D."/>
            <person name="Thomas T."/>
            <person name="Williams T.J."/>
            <person name="Egan S."/>
            <person name="Rice S."/>
            <person name="DeMaere M.Z."/>
            <person name="Ting L."/>
            <person name="Ertan H."/>
            <person name="Johnson J."/>
            <person name="Ferriera S."/>
            <person name="Lapidus A."/>
            <person name="Anderson I."/>
            <person name="Kyrpides N."/>
            <person name="Munk A.C."/>
            <person name="Detter C."/>
            <person name="Han C.S."/>
            <person name="Brown M.V."/>
            <person name="Robb F.T."/>
            <person name="Kjelleberg S."/>
            <person name="Cavicchioli R."/>
        </authorList>
    </citation>
    <scope>NUCLEOTIDE SEQUENCE [LARGE SCALE GENOMIC DNA]</scope>
    <source>
        <strain>DSM 13593 / LMG 18877 / RB2256</strain>
    </source>
</reference>
<feature type="chain" id="PRO_0000315171" description="UDP-N-acetylglucosamine--N-acetylmuramyl-(pentapeptide) pyrophosphoryl-undecaprenol N-acetylglucosamine transferase">
    <location>
        <begin position="1"/>
        <end position="392"/>
    </location>
</feature>
<feature type="binding site" evidence="1">
    <location>
        <begin position="14"/>
        <end position="16"/>
    </location>
    <ligand>
        <name>UDP-N-acetyl-alpha-D-glucosamine</name>
        <dbReference type="ChEBI" id="CHEBI:57705"/>
    </ligand>
</feature>
<feature type="binding site" evidence="1">
    <location>
        <position position="124"/>
    </location>
    <ligand>
        <name>UDP-N-acetyl-alpha-D-glucosamine</name>
        <dbReference type="ChEBI" id="CHEBI:57705"/>
    </ligand>
</feature>
<feature type="binding site" evidence="1">
    <location>
        <position position="167"/>
    </location>
    <ligand>
        <name>UDP-N-acetyl-alpha-D-glucosamine</name>
        <dbReference type="ChEBI" id="CHEBI:57705"/>
    </ligand>
</feature>
<feature type="binding site" evidence="1">
    <location>
        <position position="195"/>
    </location>
    <ligand>
        <name>UDP-N-acetyl-alpha-D-glucosamine</name>
        <dbReference type="ChEBI" id="CHEBI:57705"/>
    </ligand>
</feature>
<feature type="binding site" evidence="1">
    <location>
        <position position="251"/>
    </location>
    <ligand>
        <name>UDP-N-acetyl-alpha-D-glucosamine</name>
        <dbReference type="ChEBI" id="CHEBI:57705"/>
    </ligand>
</feature>
<feature type="binding site" evidence="1">
    <location>
        <position position="296"/>
    </location>
    <ligand>
        <name>UDP-N-acetyl-alpha-D-glucosamine</name>
        <dbReference type="ChEBI" id="CHEBI:57705"/>
    </ligand>
</feature>
<dbReference type="EC" id="2.4.1.227" evidence="1"/>
<dbReference type="EMBL" id="CP000356">
    <property type="protein sequence ID" value="ABF53593.1"/>
    <property type="molecule type" value="Genomic_DNA"/>
</dbReference>
<dbReference type="RefSeq" id="WP_011542171.1">
    <property type="nucleotide sequence ID" value="NC_008048.1"/>
</dbReference>
<dbReference type="SMR" id="Q1GRX9"/>
<dbReference type="STRING" id="317655.Sala_1881"/>
<dbReference type="CAZy" id="GT28">
    <property type="family name" value="Glycosyltransferase Family 28"/>
</dbReference>
<dbReference type="KEGG" id="sal:Sala_1881"/>
<dbReference type="eggNOG" id="COG0707">
    <property type="taxonomic scope" value="Bacteria"/>
</dbReference>
<dbReference type="HOGENOM" id="CLU_037404_2_1_5"/>
<dbReference type="OrthoDB" id="9808936at2"/>
<dbReference type="UniPathway" id="UPA00219"/>
<dbReference type="Proteomes" id="UP000006578">
    <property type="component" value="Chromosome"/>
</dbReference>
<dbReference type="GO" id="GO:0005886">
    <property type="term" value="C:plasma membrane"/>
    <property type="evidence" value="ECO:0007669"/>
    <property type="project" value="UniProtKB-SubCell"/>
</dbReference>
<dbReference type="GO" id="GO:0051991">
    <property type="term" value="F:UDP-N-acetyl-D-glucosamine:N-acetylmuramoyl-L-alanyl-D-glutamyl-meso-2,6-diaminopimelyl-D-alanyl-D-alanine-diphosphoundecaprenol 4-beta-N-acetylglucosaminlytransferase activity"/>
    <property type="evidence" value="ECO:0007669"/>
    <property type="project" value="RHEA"/>
</dbReference>
<dbReference type="GO" id="GO:0050511">
    <property type="term" value="F:undecaprenyldiphospho-muramoylpentapeptide beta-N-acetylglucosaminyltransferase activity"/>
    <property type="evidence" value="ECO:0007669"/>
    <property type="project" value="UniProtKB-UniRule"/>
</dbReference>
<dbReference type="GO" id="GO:0005975">
    <property type="term" value="P:carbohydrate metabolic process"/>
    <property type="evidence" value="ECO:0007669"/>
    <property type="project" value="InterPro"/>
</dbReference>
<dbReference type="GO" id="GO:0051301">
    <property type="term" value="P:cell division"/>
    <property type="evidence" value="ECO:0007669"/>
    <property type="project" value="UniProtKB-KW"/>
</dbReference>
<dbReference type="GO" id="GO:0071555">
    <property type="term" value="P:cell wall organization"/>
    <property type="evidence" value="ECO:0007669"/>
    <property type="project" value="UniProtKB-KW"/>
</dbReference>
<dbReference type="GO" id="GO:0030259">
    <property type="term" value="P:lipid glycosylation"/>
    <property type="evidence" value="ECO:0007669"/>
    <property type="project" value="UniProtKB-UniRule"/>
</dbReference>
<dbReference type="GO" id="GO:0009252">
    <property type="term" value="P:peptidoglycan biosynthetic process"/>
    <property type="evidence" value="ECO:0007669"/>
    <property type="project" value="UniProtKB-UniRule"/>
</dbReference>
<dbReference type="GO" id="GO:0008360">
    <property type="term" value="P:regulation of cell shape"/>
    <property type="evidence" value="ECO:0007669"/>
    <property type="project" value="UniProtKB-KW"/>
</dbReference>
<dbReference type="CDD" id="cd03785">
    <property type="entry name" value="GT28_MurG"/>
    <property type="match status" value="1"/>
</dbReference>
<dbReference type="Gene3D" id="3.40.50.2000">
    <property type="entry name" value="Glycogen Phosphorylase B"/>
    <property type="match status" value="2"/>
</dbReference>
<dbReference type="HAMAP" id="MF_00033">
    <property type="entry name" value="MurG"/>
    <property type="match status" value="1"/>
</dbReference>
<dbReference type="InterPro" id="IPR006009">
    <property type="entry name" value="GlcNAc_MurG"/>
</dbReference>
<dbReference type="InterPro" id="IPR007235">
    <property type="entry name" value="Glyco_trans_28_C"/>
</dbReference>
<dbReference type="InterPro" id="IPR004276">
    <property type="entry name" value="GlycoTrans_28_N"/>
</dbReference>
<dbReference type="NCBIfam" id="TIGR01133">
    <property type="entry name" value="murG"/>
    <property type="match status" value="1"/>
</dbReference>
<dbReference type="PANTHER" id="PTHR21015:SF22">
    <property type="entry name" value="GLYCOSYLTRANSFERASE"/>
    <property type="match status" value="1"/>
</dbReference>
<dbReference type="PANTHER" id="PTHR21015">
    <property type="entry name" value="UDP-N-ACETYLGLUCOSAMINE--N-ACETYLMURAMYL-(PENTAPEPTIDE) PYROPHOSPHORYL-UNDECAPRENOL N-ACETYLGLUCOSAMINE TRANSFERASE 1"/>
    <property type="match status" value="1"/>
</dbReference>
<dbReference type="Pfam" id="PF04101">
    <property type="entry name" value="Glyco_tran_28_C"/>
    <property type="match status" value="1"/>
</dbReference>
<dbReference type="Pfam" id="PF03033">
    <property type="entry name" value="Glyco_transf_28"/>
    <property type="match status" value="1"/>
</dbReference>
<dbReference type="SUPFAM" id="SSF53756">
    <property type="entry name" value="UDP-Glycosyltransferase/glycogen phosphorylase"/>
    <property type="match status" value="1"/>
</dbReference>
<name>MURG_SPHAL</name>
<protein>
    <recommendedName>
        <fullName evidence="1">UDP-N-acetylglucosamine--N-acetylmuramyl-(pentapeptide) pyrophosphoryl-undecaprenol N-acetylglucosamine transferase</fullName>
        <ecNumber evidence="1">2.4.1.227</ecNumber>
    </recommendedName>
    <alternativeName>
        <fullName evidence="1">Undecaprenyl-PP-MurNAc-pentapeptide-UDPGlcNAc GlcNAc transferase</fullName>
    </alternativeName>
</protein>
<keyword id="KW-0131">Cell cycle</keyword>
<keyword id="KW-0132">Cell division</keyword>
<keyword id="KW-0997">Cell inner membrane</keyword>
<keyword id="KW-1003">Cell membrane</keyword>
<keyword id="KW-0133">Cell shape</keyword>
<keyword id="KW-0961">Cell wall biogenesis/degradation</keyword>
<keyword id="KW-0328">Glycosyltransferase</keyword>
<keyword id="KW-0472">Membrane</keyword>
<keyword id="KW-0573">Peptidoglycan synthesis</keyword>
<keyword id="KW-1185">Reference proteome</keyword>
<keyword id="KW-0808">Transferase</keyword>
<accession>Q1GRX9</accession>